<organism>
    <name type="scientific">Neisseria meningitidis serogroup A / serotype 4A (strain DSM 15465 / Z2491)</name>
    <dbReference type="NCBI Taxonomy" id="122587"/>
    <lineage>
        <taxon>Bacteria</taxon>
        <taxon>Pseudomonadati</taxon>
        <taxon>Pseudomonadota</taxon>
        <taxon>Betaproteobacteria</taxon>
        <taxon>Neisseriales</taxon>
        <taxon>Neisseriaceae</taxon>
        <taxon>Neisseria</taxon>
    </lineage>
</organism>
<sequence>MSLIECKNINRYFGSGENRVHILKDISLSIEKGDFVAIIGQSGSGKSTLMNILGCLDTAGSGSYRIDGIETAKMQPDELAALRRERFGFIFQRYNLLSSLTARDNVALPAVYMGAGGKERSARADKLLQDLGLASKEGNKPSELSGGQQQRVSIARALMNGGEIIFADEPTGALDTASGKNVMEIIHKLHEAGHTVIMVTHDPGIAANANRVIEIRDGEIISDTSKNPEIPASNVGRIQEKASWSFYYDQFVEAFRMSVQAVLAHKMRSLLTMLGIIIGIASVVSVVALGNGSQKKILEDISSIGTNTISIFPGRGFGDRRSGRIKTLTIDDAKIIAKQSYVASATPMTSSGGTLTYRNTDLTASLYGVGEQYFDVRGLKLETGRLFDENDVKEDAQVVVIDQNVKDKLFADSDPLGKTILFRKRPLTVIGVMKKDENAFGNSDVLMLWSPYTTVMHQITGESHTNSITVKIKDNANTQVAEKGLTDLLKARHGTEDFFMNNSDSIRQIVESTTGTMKLLISSIALISLVVGGIGVMNIMLVSVTERTKEIGIRMAIGARRGNILQQFLIEAVLICVIGGLVGVGLSAAVSLVFNHFVTDFPMDISAMSVIGAVACSTGIGIAFGFMPANKAAKLNPIDALAQD</sequence>
<name>MACB_NEIMA</name>
<reference key="1">
    <citation type="journal article" date="2000" name="Nature">
        <title>Complete DNA sequence of a serogroup A strain of Neisseria meningitidis Z2491.</title>
        <authorList>
            <person name="Parkhill J."/>
            <person name="Achtman M."/>
            <person name="James K.D."/>
            <person name="Bentley S.D."/>
            <person name="Churcher C.M."/>
            <person name="Klee S.R."/>
            <person name="Morelli G."/>
            <person name="Basham D."/>
            <person name="Brown D."/>
            <person name="Chillingworth T."/>
            <person name="Davies R.M."/>
            <person name="Davis P."/>
            <person name="Devlin K."/>
            <person name="Feltwell T."/>
            <person name="Hamlin N."/>
            <person name="Holroyd S."/>
            <person name="Jagels K."/>
            <person name="Leather S."/>
            <person name="Moule S."/>
            <person name="Mungall K.L."/>
            <person name="Quail M.A."/>
            <person name="Rajandream M.A."/>
            <person name="Rutherford K.M."/>
            <person name="Simmonds M."/>
            <person name="Skelton J."/>
            <person name="Whitehead S."/>
            <person name="Spratt B.G."/>
            <person name="Barrell B.G."/>
        </authorList>
    </citation>
    <scope>NUCLEOTIDE SEQUENCE [LARGE SCALE GENOMIC DNA]</scope>
    <source>
        <strain>DSM 15465 / Z2491</strain>
    </source>
</reference>
<keyword id="KW-0046">Antibiotic resistance</keyword>
<keyword id="KW-0067">ATP-binding</keyword>
<keyword id="KW-0997">Cell inner membrane</keyword>
<keyword id="KW-1003">Cell membrane</keyword>
<keyword id="KW-0472">Membrane</keyword>
<keyword id="KW-0547">Nucleotide-binding</keyword>
<keyword id="KW-1278">Translocase</keyword>
<keyword id="KW-0812">Transmembrane</keyword>
<keyword id="KW-1133">Transmembrane helix</keyword>
<keyword id="KW-0813">Transport</keyword>
<feature type="chain" id="PRO_0000269949" description="Macrolide export ATP-binding/permease protein MacB">
    <location>
        <begin position="1"/>
        <end position="644"/>
    </location>
</feature>
<feature type="transmembrane region" description="Helical" evidence="1">
    <location>
        <begin position="270"/>
        <end position="290"/>
    </location>
</feature>
<feature type="transmembrane region" description="Helical" evidence="1">
    <location>
        <begin position="524"/>
        <end position="544"/>
    </location>
</feature>
<feature type="transmembrane region" description="Helical" evidence="1">
    <location>
        <begin position="574"/>
        <end position="594"/>
    </location>
</feature>
<feature type="transmembrane region" description="Helical" evidence="1">
    <location>
        <begin position="607"/>
        <end position="627"/>
    </location>
</feature>
<feature type="domain" description="ABC transporter" evidence="1">
    <location>
        <begin position="4"/>
        <end position="242"/>
    </location>
</feature>
<feature type="binding site" evidence="1">
    <location>
        <begin position="40"/>
        <end position="47"/>
    </location>
    <ligand>
        <name>ATP</name>
        <dbReference type="ChEBI" id="CHEBI:30616"/>
    </ligand>
</feature>
<protein>
    <recommendedName>
        <fullName evidence="1">Macrolide export ATP-binding/permease protein MacB</fullName>
        <ecNumber evidence="1">7.6.2.-</ecNumber>
    </recommendedName>
</protein>
<accession>Q9JVR5</accession>
<accession>A1IQF1</accession>
<gene>
    <name evidence="1" type="primary">macB</name>
    <name type="ordered locus">NMA0729</name>
</gene>
<comment type="function">
    <text evidence="1">Non-canonical ABC transporter that contains transmembrane domains (TMD), which form a pore in the inner membrane, and an ATP-binding domain (NBD), which is responsible for energy generation. Confers resistance against macrolides.</text>
</comment>
<comment type="subunit">
    <text evidence="1">Homodimer.</text>
</comment>
<comment type="subcellular location">
    <subcellularLocation>
        <location evidence="1">Cell inner membrane</location>
        <topology evidence="1">Multi-pass membrane protein</topology>
    </subcellularLocation>
</comment>
<comment type="similarity">
    <text evidence="1">Belongs to the ABC transporter superfamily. Macrolide exporter (TC 3.A.1.122) family.</text>
</comment>
<proteinExistence type="inferred from homology"/>
<evidence type="ECO:0000255" key="1">
    <source>
        <dbReference type="HAMAP-Rule" id="MF_01720"/>
    </source>
</evidence>
<dbReference type="EC" id="7.6.2.-" evidence="1"/>
<dbReference type="EMBL" id="AL157959">
    <property type="protein sequence ID" value="CAM07982.1"/>
    <property type="molecule type" value="Genomic_DNA"/>
</dbReference>
<dbReference type="PIR" id="C81916">
    <property type="entry name" value="C81916"/>
</dbReference>
<dbReference type="RefSeq" id="WP_002246843.1">
    <property type="nucleotide sequence ID" value="NC_003116.1"/>
</dbReference>
<dbReference type="SMR" id="Q9JVR5"/>
<dbReference type="EnsemblBacteria" id="CAM07982">
    <property type="protein sequence ID" value="CAM07982"/>
    <property type="gene ID" value="NMA0729"/>
</dbReference>
<dbReference type="KEGG" id="nma:NMA0729"/>
<dbReference type="HOGENOM" id="CLU_000604_78_1_4"/>
<dbReference type="Proteomes" id="UP000000626">
    <property type="component" value="Chromosome"/>
</dbReference>
<dbReference type="GO" id="GO:0005886">
    <property type="term" value="C:plasma membrane"/>
    <property type="evidence" value="ECO:0007669"/>
    <property type="project" value="UniProtKB-SubCell"/>
</dbReference>
<dbReference type="GO" id="GO:0005524">
    <property type="term" value="F:ATP binding"/>
    <property type="evidence" value="ECO:0007669"/>
    <property type="project" value="UniProtKB-KW"/>
</dbReference>
<dbReference type="GO" id="GO:0016887">
    <property type="term" value="F:ATP hydrolysis activity"/>
    <property type="evidence" value="ECO:0007669"/>
    <property type="project" value="InterPro"/>
</dbReference>
<dbReference type="GO" id="GO:0022857">
    <property type="term" value="F:transmembrane transporter activity"/>
    <property type="evidence" value="ECO:0007669"/>
    <property type="project" value="TreeGrafter"/>
</dbReference>
<dbReference type="GO" id="GO:0046677">
    <property type="term" value="P:response to antibiotic"/>
    <property type="evidence" value="ECO:0007669"/>
    <property type="project" value="UniProtKB-KW"/>
</dbReference>
<dbReference type="CDD" id="cd03255">
    <property type="entry name" value="ABC_MJ0796_LolCDE_FtsE"/>
    <property type="match status" value="1"/>
</dbReference>
<dbReference type="FunFam" id="3.40.50.300:FF:000032">
    <property type="entry name" value="Export ABC transporter ATP-binding protein"/>
    <property type="match status" value="1"/>
</dbReference>
<dbReference type="Gene3D" id="3.40.50.300">
    <property type="entry name" value="P-loop containing nucleotide triphosphate hydrolases"/>
    <property type="match status" value="1"/>
</dbReference>
<dbReference type="InterPro" id="IPR003593">
    <property type="entry name" value="AAA+_ATPase"/>
</dbReference>
<dbReference type="InterPro" id="IPR003838">
    <property type="entry name" value="ABC3_permease_C"/>
</dbReference>
<dbReference type="InterPro" id="IPR003439">
    <property type="entry name" value="ABC_transporter-like_ATP-bd"/>
</dbReference>
<dbReference type="InterPro" id="IPR017871">
    <property type="entry name" value="ABC_transporter-like_CS"/>
</dbReference>
<dbReference type="InterPro" id="IPR017911">
    <property type="entry name" value="MacB-like_ATP-bd"/>
</dbReference>
<dbReference type="InterPro" id="IPR025857">
    <property type="entry name" value="MacB_PCD"/>
</dbReference>
<dbReference type="InterPro" id="IPR050250">
    <property type="entry name" value="Macrolide_Exporter_MacB"/>
</dbReference>
<dbReference type="InterPro" id="IPR027417">
    <property type="entry name" value="P-loop_NTPase"/>
</dbReference>
<dbReference type="PANTHER" id="PTHR30572:SF14">
    <property type="entry name" value="MACROLIDE EXPORT ATP-BINDING_PERMEASE PROTEIN MACB"/>
    <property type="match status" value="1"/>
</dbReference>
<dbReference type="PANTHER" id="PTHR30572">
    <property type="entry name" value="MEMBRANE COMPONENT OF TRANSPORTER-RELATED"/>
    <property type="match status" value="1"/>
</dbReference>
<dbReference type="Pfam" id="PF00005">
    <property type="entry name" value="ABC_tran"/>
    <property type="match status" value="1"/>
</dbReference>
<dbReference type="Pfam" id="PF02687">
    <property type="entry name" value="FtsX"/>
    <property type="match status" value="1"/>
</dbReference>
<dbReference type="Pfam" id="PF12704">
    <property type="entry name" value="MacB_PCD"/>
    <property type="match status" value="1"/>
</dbReference>
<dbReference type="SMART" id="SM00382">
    <property type="entry name" value="AAA"/>
    <property type="match status" value="1"/>
</dbReference>
<dbReference type="SUPFAM" id="SSF52540">
    <property type="entry name" value="P-loop containing nucleoside triphosphate hydrolases"/>
    <property type="match status" value="1"/>
</dbReference>
<dbReference type="PROSITE" id="PS00211">
    <property type="entry name" value="ABC_TRANSPORTER_1"/>
    <property type="match status" value="1"/>
</dbReference>
<dbReference type="PROSITE" id="PS50893">
    <property type="entry name" value="ABC_TRANSPORTER_2"/>
    <property type="match status" value="1"/>
</dbReference>
<dbReference type="PROSITE" id="PS51267">
    <property type="entry name" value="MACB"/>
    <property type="match status" value="1"/>
</dbReference>